<gene>
    <name evidence="1" type="primary">rnhB</name>
    <name type="ordered locus">Bcenmc03_2025</name>
</gene>
<organism>
    <name type="scientific">Burkholderia orbicola (strain MC0-3)</name>
    <dbReference type="NCBI Taxonomy" id="406425"/>
    <lineage>
        <taxon>Bacteria</taxon>
        <taxon>Pseudomonadati</taxon>
        <taxon>Pseudomonadota</taxon>
        <taxon>Betaproteobacteria</taxon>
        <taxon>Burkholderiales</taxon>
        <taxon>Burkholderiaceae</taxon>
        <taxon>Burkholderia</taxon>
        <taxon>Burkholderia cepacia complex</taxon>
        <taxon>Burkholderia orbicola</taxon>
    </lineage>
</organism>
<reference key="1">
    <citation type="submission" date="2008-02" db="EMBL/GenBank/DDBJ databases">
        <title>Complete sequence of chromosome 1 of Burkholderia cenocepacia MC0-3.</title>
        <authorList>
            <person name="Copeland A."/>
            <person name="Lucas S."/>
            <person name="Lapidus A."/>
            <person name="Barry K."/>
            <person name="Bruce D."/>
            <person name="Goodwin L."/>
            <person name="Glavina del Rio T."/>
            <person name="Dalin E."/>
            <person name="Tice H."/>
            <person name="Pitluck S."/>
            <person name="Chain P."/>
            <person name="Malfatti S."/>
            <person name="Shin M."/>
            <person name="Vergez L."/>
            <person name="Schmutz J."/>
            <person name="Larimer F."/>
            <person name="Land M."/>
            <person name="Hauser L."/>
            <person name="Kyrpides N."/>
            <person name="Mikhailova N."/>
            <person name="Tiedje J."/>
            <person name="Richardson P."/>
        </authorList>
    </citation>
    <scope>NUCLEOTIDE SEQUENCE [LARGE SCALE GENOMIC DNA]</scope>
    <source>
        <strain>MC0-3</strain>
    </source>
</reference>
<proteinExistence type="inferred from homology"/>
<keyword id="KW-0963">Cytoplasm</keyword>
<keyword id="KW-0255">Endonuclease</keyword>
<keyword id="KW-0378">Hydrolase</keyword>
<keyword id="KW-0464">Manganese</keyword>
<keyword id="KW-0479">Metal-binding</keyword>
<keyword id="KW-0540">Nuclease</keyword>
<protein>
    <recommendedName>
        <fullName evidence="1">Ribonuclease HII</fullName>
        <shortName evidence="1">RNase HII</shortName>
        <ecNumber evidence="1">3.1.26.4</ecNumber>
    </recommendedName>
</protein>
<accession>B1JUD6</accession>
<name>RNH2_BURO0</name>
<dbReference type="EC" id="3.1.26.4" evidence="1"/>
<dbReference type="EMBL" id="CP000958">
    <property type="protein sequence ID" value="ACA91186.1"/>
    <property type="molecule type" value="Genomic_DNA"/>
</dbReference>
<dbReference type="RefSeq" id="WP_012328754.1">
    <property type="nucleotide sequence ID" value="NC_010508.1"/>
</dbReference>
<dbReference type="SMR" id="B1JUD6"/>
<dbReference type="GeneID" id="83048802"/>
<dbReference type="KEGG" id="bcm:Bcenmc03_2025"/>
<dbReference type="HOGENOM" id="CLU_036532_3_2_4"/>
<dbReference type="Proteomes" id="UP000002169">
    <property type="component" value="Chromosome 1"/>
</dbReference>
<dbReference type="GO" id="GO:0005737">
    <property type="term" value="C:cytoplasm"/>
    <property type="evidence" value="ECO:0007669"/>
    <property type="project" value="UniProtKB-SubCell"/>
</dbReference>
<dbReference type="GO" id="GO:0032299">
    <property type="term" value="C:ribonuclease H2 complex"/>
    <property type="evidence" value="ECO:0007669"/>
    <property type="project" value="TreeGrafter"/>
</dbReference>
<dbReference type="GO" id="GO:0030145">
    <property type="term" value="F:manganese ion binding"/>
    <property type="evidence" value="ECO:0007669"/>
    <property type="project" value="UniProtKB-UniRule"/>
</dbReference>
<dbReference type="GO" id="GO:0003723">
    <property type="term" value="F:RNA binding"/>
    <property type="evidence" value="ECO:0007669"/>
    <property type="project" value="InterPro"/>
</dbReference>
<dbReference type="GO" id="GO:0004523">
    <property type="term" value="F:RNA-DNA hybrid ribonuclease activity"/>
    <property type="evidence" value="ECO:0007669"/>
    <property type="project" value="UniProtKB-UniRule"/>
</dbReference>
<dbReference type="GO" id="GO:0043137">
    <property type="term" value="P:DNA replication, removal of RNA primer"/>
    <property type="evidence" value="ECO:0007669"/>
    <property type="project" value="TreeGrafter"/>
</dbReference>
<dbReference type="GO" id="GO:0006298">
    <property type="term" value="P:mismatch repair"/>
    <property type="evidence" value="ECO:0007669"/>
    <property type="project" value="TreeGrafter"/>
</dbReference>
<dbReference type="CDD" id="cd07182">
    <property type="entry name" value="RNase_HII_bacteria_HII_like"/>
    <property type="match status" value="1"/>
</dbReference>
<dbReference type="FunFam" id="3.30.420.10:FF:000006">
    <property type="entry name" value="Ribonuclease HII"/>
    <property type="match status" value="1"/>
</dbReference>
<dbReference type="Gene3D" id="3.30.420.10">
    <property type="entry name" value="Ribonuclease H-like superfamily/Ribonuclease H"/>
    <property type="match status" value="1"/>
</dbReference>
<dbReference type="HAMAP" id="MF_00052_B">
    <property type="entry name" value="RNase_HII_B"/>
    <property type="match status" value="1"/>
</dbReference>
<dbReference type="InterPro" id="IPR022898">
    <property type="entry name" value="RNase_HII"/>
</dbReference>
<dbReference type="InterPro" id="IPR001352">
    <property type="entry name" value="RNase_HII/HIII"/>
</dbReference>
<dbReference type="InterPro" id="IPR024567">
    <property type="entry name" value="RNase_HII/HIII_dom"/>
</dbReference>
<dbReference type="InterPro" id="IPR012337">
    <property type="entry name" value="RNaseH-like_sf"/>
</dbReference>
<dbReference type="InterPro" id="IPR036397">
    <property type="entry name" value="RNaseH_sf"/>
</dbReference>
<dbReference type="NCBIfam" id="NF000595">
    <property type="entry name" value="PRK00015.1-3"/>
    <property type="match status" value="1"/>
</dbReference>
<dbReference type="NCBIfam" id="NF000596">
    <property type="entry name" value="PRK00015.1-4"/>
    <property type="match status" value="1"/>
</dbReference>
<dbReference type="PANTHER" id="PTHR10954">
    <property type="entry name" value="RIBONUCLEASE H2 SUBUNIT A"/>
    <property type="match status" value="1"/>
</dbReference>
<dbReference type="PANTHER" id="PTHR10954:SF18">
    <property type="entry name" value="RIBONUCLEASE HII"/>
    <property type="match status" value="1"/>
</dbReference>
<dbReference type="Pfam" id="PF01351">
    <property type="entry name" value="RNase_HII"/>
    <property type="match status" value="1"/>
</dbReference>
<dbReference type="SUPFAM" id="SSF53098">
    <property type="entry name" value="Ribonuclease H-like"/>
    <property type="match status" value="1"/>
</dbReference>
<dbReference type="PROSITE" id="PS51975">
    <property type="entry name" value="RNASE_H_2"/>
    <property type="match status" value="1"/>
</dbReference>
<comment type="function">
    <text evidence="1">Endonuclease that specifically degrades the RNA of RNA-DNA hybrids.</text>
</comment>
<comment type="catalytic activity">
    <reaction evidence="1">
        <text>Endonucleolytic cleavage to 5'-phosphomonoester.</text>
        <dbReference type="EC" id="3.1.26.4"/>
    </reaction>
</comment>
<comment type="cofactor">
    <cofactor evidence="1">
        <name>Mn(2+)</name>
        <dbReference type="ChEBI" id="CHEBI:29035"/>
    </cofactor>
    <cofactor evidence="1">
        <name>Mg(2+)</name>
        <dbReference type="ChEBI" id="CHEBI:18420"/>
    </cofactor>
    <text evidence="1">Manganese or magnesium. Binds 1 divalent metal ion per monomer in the absence of substrate. May bind a second metal ion after substrate binding.</text>
</comment>
<comment type="subcellular location">
    <subcellularLocation>
        <location evidence="1">Cytoplasm</location>
    </subcellularLocation>
</comment>
<comment type="similarity">
    <text evidence="1">Belongs to the RNase HII family.</text>
</comment>
<evidence type="ECO:0000255" key="1">
    <source>
        <dbReference type="HAMAP-Rule" id="MF_00052"/>
    </source>
</evidence>
<evidence type="ECO:0000255" key="2">
    <source>
        <dbReference type="PROSITE-ProRule" id="PRU01319"/>
    </source>
</evidence>
<sequence length="214" mass="22783">MTAVRAPRRRASGDVQGGFDFSRPDEIVCGVDEAGRGPLAGPVVAAAVILDPAQPIDGLDDSKVLSAKKRDALYDLIVTRSHAYCVASASVDEIDTLNILHATMLAMKRAVEGLSVLPTLAQIDGNRCPTLSVRAEAIVSGDALVPSISAASILAKVTRDRMLVDLHERFPVYGFNVHAGYGTAKHLAALREHGPCEAHRRSFAPVRAALDLIR</sequence>
<feature type="chain" id="PRO_1000091610" description="Ribonuclease HII">
    <location>
        <begin position="1"/>
        <end position="214"/>
    </location>
</feature>
<feature type="domain" description="RNase H type-2" evidence="2">
    <location>
        <begin position="26"/>
        <end position="214"/>
    </location>
</feature>
<feature type="binding site" evidence="1">
    <location>
        <position position="32"/>
    </location>
    <ligand>
        <name>a divalent metal cation</name>
        <dbReference type="ChEBI" id="CHEBI:60240"/>
    </ligand>
</feature>
<feature type="binding site" evidence="1">
    <location>
        <position position="33"/>
    </location>
    <ligand>
        <name>a divalent metal cation</name>
        <dbReference type="ChEBI" id="CHEBI:60240"/>
    </ligand>
</feature>
<feature type="binding site" evidence="1">
    <location>
        <position position="124"/>
    </location>
    <ligand>
        <name>a divalent metal cation</name>
        <dbReference type="ChEBI" id="CHEBI:60240"/>
    </ligand>
</feature>